<proteinExistence type="inferred from homology"/>
<comment type="similarity">
    <text evidence="3">Belongs to the short-chain dehydrogenases/reductases (SDR) family.</text>
</comment>
<reference key="1">
    <citation type="journal article" date="1995" name="Science">
        <title>Whole-genome random sequencing and assembly of Haemophilus influenzae Rd.</title>
        <authorList>
            <person name="Fleischmann R.D."/>
            <person name="Adams M.D."/>
            <person name="White O."/>
            <person name="Clayton R.A."/>
            <person name="Kirkness E.F."/>
            <person name="Kerlavage A.R."/>
            <person name="Bult C.J."/>
            <person name="Tomb J.-F."/>
            <person name="Dougherty B.A."/>
            <person name="Merrick J.M."/>
            <person name="McKenney K."/>
            <person name="Sutton G.G."/>
            <person name="FitzHugh W."/>
            <person name="Fields C.A."/>
            <person name="Gocayne J.D."/>
            <person name="Scott J.D."/>
            <person name="Shirley R."/>
            <person name="Liu L.-I."/>
            <person name="Glodek A."/>
            <person name="Kelley J.M."/>
            <person name="Weidman J.F."/>
            <person name="Phillips C.A."/>
            <person name="Spriggs T."/>
            <person name="Hedblom E."/>
            <person name="Cotton M.D."/>
            <person name="Utterback T.R."/>
            <person name="Hanna M.C."/>
            <person name="Nguyen D.T."/>
            <person name="Saudek D.M."/>
            <person name="Brandon R.C."/>
            <person name="Fine L.D."/>
            <person name="Fritchman J.L."/>
            <person name="Fuhrmann J.L."/>
            <person name="Geoghagen N.S.M."/>
            <person name="Gnehm C.L."/>
            <person name="McDonald L.A."/>
            <person name="Small K.V."/>
            <person name="Fraser C.M."/>
            <person name="Smith H.O."/>
            <person name="Venter J.C."/>
        </authorList>
    </citation>
    <scope>NUCLEOTIDE SEQUENCE [LARGE SCALE GENOMIC DNA]</scope>
    <source>
        <strain>ATCC 51907 / DSM 11121 / KW20 / Rd</strain>
    </source>
</reference>
<organism>
    <name type="scientific">Haemophilus influenzae (strain ATCC 51907 / DSM 11121 / KW20 / Rd)</name>
    <dbReference type="NCBI Taxonomy" id="71421"/>
    <lineage>
        <taxon>Bacteria</taxon>
        <taxon>Pseudomonadati</taxon>
        <taxon>Pseudomonadota</taxon>
        <taxon>Gammaproteobacteria</taxon>
        <taxon>Pasteurellales</taxon>
        <taxon>Pasteurellaceae</taxon>
        <taxon>Haemophilus</taxon>
    </lineage>
</organism>
<gene>
    <name type="ordered locus">HI_1430</name>
</gene>
<evidence type="ECO:0000250" key="1"/>
<evidence type="ECO:0000255" key="2">
    <source>
        <dbReference type="PROSITE-ProRule" id="PRU10001"/>
    </source>
</evidence>
<evidence type="ECO:0000305" key="3"/>
<protein>
    <recommendedName>
        <fullName>Probable NADP-dependent dehydrogenase HI_1430</fullName>
        <ecNumber>1.1.1.-</ecNumber>
    </recommendedName>
</protein>
<keyword id="KW-0521">NADP</keyword>
<keyword id="KW-0560">Oxidoreductase</keyword>
<keyword id="KW-1185">Reference proteome</keyword>
<sequence length="252" mass="27398">MKTTTALVTGATAGFGLAICKKLIEAGYKVIGTGRRADRLAEIHSQLGNNFLPLAFDIRDEQATINALNTLPEGWQAVDLLVNNAGLALGLEPAHKADLQDWYQMIDTNIKGLVTITRLVLPNMVARNYGQIINLSSIAGTYPYAGSNVYGGTKAFVTQFSLNLRADLAGTKIRVSNVEPGLCGGTEFSNVRFHGDDERAAKVYENVQSVQPEDIANIVLWLHQQPEHVNINRIEVMPTAQSFAGMSVSKEK</sequence>
<dbReference type="EC" id="1.1.1.-"/>
<dbReference type="EMBL" id="L42023">
    <property type="protein sequence ID" value="AAC23077.1"/>
    <property type="molecule type" value="Genomic_DNA"/>
</dbReference>
<dbReference type="PIR" id="H64122">
    <property type="entry name" value="H64122"/>
</dbReference>
<dbReference type="RefSeq" id="NP_439579.1">
    <property type="nucleotide sequence ID" value="NC_000907.1"/>
</dbReference>
<dbReference type="SMR" id="P45200"/>
<dbReference type="STRING" id="71421.HI_1430"/>
<dbReference type="EnsemblBacteria" id="AAC23077">
    <property type="protein sequence ID" value="AAC23077"/>
    <property type="gene ID" value="HI_1430"/>
</dbReference>
<dbReference type="KEGG" id="hin:HI_1430"/>
<dbReference type="PATRIC" id="fig|71421.8.peg.1487"/>
<dbReference type="eggNOG" id="COG4221">
    <property type="taxonomic scope" value="Bacteria"/>
</dbReference>
<dbReference type="HOGENOM" id="CLU_010194_2_10_6"/>
<dbReference type="OrthoDB" id="9810734at2"/>
<dbReference type="PhylomeDB" id="P45200"/>
<dbReference type="BioCyc" id="HINF71421:G1GJ1-1453-MONOMER"/>
<dbReference type="Proteomes" id="UP000000579">
    <property type="component" value="Chromosome"/>
</dbReference>
<dbReference type="GO" id="GO:0005829">
    <property type="term" value="C:cytosol"/>
    <property type="evidence" value="ECO:0000318"/>
    <property type="project" value="GO_Central"/>
</dbReference>
<dbReference type="GO" id="GO:0016491">
    <property type="term" value="F:oxidoreductase activity"/>
    <property type="evidence" value="ECO:0007669"/>
    <property type="project" value="UniProtKB-KW"/>
</dbReference>
<dbReference type="CDD" id="cd05346">
    <property type="entry name" value="SDR_c5"/>
    <property type="match status" value="1"/>
</dbReference>
<dbReference type="FunFam" id="3.40.50.720:FF:000047">
    <property type="entry name" value="NADP-dependent L-serine/L-allo-threonine dehydrogenase"/>
    <property type="match status" value="1"/>
</dbReference>
<dbReference type="Gene3D" id="3.40.50.720">
    <property type="entry name" value="NAD(P)-binding Rossmann-like Domain"/>
    <property type="match status" value="1"/>
</dbReference>
<dbReference type="InterPro" id="IPR036291">
    <property type="entry name" value="NAD(P)-bd_dom_sf"/>
</dbReference>
<dbReference type="InterPro" id="IPR020904">
    <property type="entry name" value="Sc_DH/Rdtase_CS"/>
</dbReference>
<dbReference type="InterPro" id="IPR002347">
    <property type="entry name" value="SDR_fam"/>
</dbReference>
<dbReference type="PANTHER" id="PTHR42901">
    <property type="entry name" value="ALCOHOL DEHYDROGENASE"/>
    <property type="match status" value="1"/>
</dbReference>
<dbReference type="PANTHER" id="PTHR42901:SF1">
    <property type="entry name" value="ALCOHOL DEHYDROGENASE"/>
    <property type="match status" value="1"/>
</dbReference>
<dbReference type="Pfam" id="PF00106">
    <property type="entry name" value="adh_short"/>
    <property type="match status" value="1"/>
</dbReference>
<dbReference type="PRINTS" id="PR00081">
    <property type="entry name" value="GDHRDH"/>
</dbReference>
<dbReference type="PRINTS" id="PR00080">
    <property type="entry name" value="SDRFAMILY"/>
</dbReference>
<dbReference type="SUPFAM" id="SSF51735">
    <property type="entry name" value="NAD(P)-binding Rossmann-fold domains"/>
    <property type="match status" value="1"/>
</dbReference>
<dbReference type="PROSITE" id="PS00061">
    <property type="entry name" value="ADH_SHORT"/>
    <property type="match status" value="1"/>
</dbReference>
<accession>P45200</accession>
<name>Y1430_HAEIN</name>
<feature type="chain" id="PRO_0000054831" description="Probable NADP-dependent dehydrogenase HI_1430">
    <location>
        <begin position="1"/>
        <end position="252"/>
    </location>
</feature>
<feature type="active site" description="Proton acceptor" evidence="2">
    <location>
        <position position="150"/>
    </location>
</feature>
<feature type="binding site" evidence="1">
    <location>
        <begin position="7"/>
        <end position="31"/>
    </location>
    <ligand>
        <name>NADP(+)</name>
        <dbReference type="ChEBI" id="CHEBI:58349"/>
    </ligand>
</feature>
<feature type="binding site" evidence="1">
    <location>
        <position position="137"/>
    </location>
    <ligand>
        <name>substrate</name>
    </ligand>
</feature>